<sequence>MGRRKIEIKAIKDDRNRSVTFLKRKGGLFKKAHELSVLCSVDVAVFIFGTNKKLYEYSSGDMRELITRYTYHGGATEHKGPSDFNGGDDDDEEEGDGTPPLDQPMDAHMMPPHFQGQGPFPPHVMRHYTPSASPPIPNGVPFPPHGHGVPRGHTPQPQMLSRPGSRNDARRMGQPMGPQGSPQVNGFGFGQQQSMYGPPNTTMPPHMPPQMAPGPPFPYPQHPQHPPHPPHPPHPPHPQQPHQPQMQQQFIEDGRRATMPANFAPHPPPPHGPMGMQRHSVSPPQQHPHHVPQLPPQQPQQHPHSSPPQPQHHQMQSPPQPMVKFESPQQIEPPQHQHQQQPEPQEPRPEQQQQQQQSQQSQQPQEPQSEPARSLPPPPPPLEVKTELAPPAQPGRIPQPSLLDTAVKKLPRQKQHSIFTPIDENRSILSQHLAAFHAEPSKNKSSPPAHHRSSSVDESTSNASEASRGKDKDIASSPPLLKRADPRASISSVSSAPESAPAPPSRSNSLRAGPPRPRLKVQIPDEQSEDGSGSATAESASSAQGGASTDATSQSTRQNDSHSSTNMVLPPPSPSASALLSAGATGPPNPFAPKRPPQHPAPGLNIDTPVSALPSRFLNNEFLPSPSSFYPDWNFRGGDNNTLPSPLNFATPVVGTGPSFLRDENPGASLKRKSPDNLSIHGPISDNPLEAGNEPKRVKVDS</sequence>
<dbReference type="EMBL" id="EU164776">
    <property type="protein sequence ID" value="ABX79379.1"/>
    <property type="molecule type" value="Genomic_DNA"/>
</dbReference>
<dbReference type="SMR" id="A9YDN6"/>
<dbReference type="PHI-base" id="PHI:1070"/>
<dbReference type="GO" id="GO:0005634">
    <property type="term" value="C:nucleus"/>
    <property type="evidence" value="ECO:0007669"/>
    <property type="project" value="UniProtKB-SubCell"/>
</dbReference>
<dbReference type="GO" id="GO:0046983">
    <property type="term" value="F:protein dimerization activity"/>
    <property type="evidence" value="ECO:0007669"/>
    <property type="project" value="InterPro"/>
</dbReference>
<dbReference type="GO" id="GO:0000977">
    <property type="term" value="F:RNA polymerase II transcription regulatory region sequence-specific DNA binding"/>
    <property type="evidence" value="ECO:0007669"/>
    <property type="project" value="InterPro"/>
</dbReference>
<dbReference type="GO" id="GO:0045944">
    <property type="term" value="P:positive regulation of transcription by RNA polymerase II"/>
    <property type="evidence" value="ECO:0007669"/>
    <property type="project" value="InterPro"/>
</dbReference>
<dbReference type="CDD" id="cd00265">
    <property type="entry name" value="MADS_MEF2_like"/>
    <property type="match status" value="1"/>
</dbReference>
<dbReference type="FunFam" id="3.40.1810.10:FF:000013">
    <property type="entry name" value="Transcription factor, MADS-box"/>
    <property type="match status" value="1"/>
</dbReference>
<dbReference type="Gene3D" id="3.40.1810.10">
    <property type="entry name" value="Transcription factor, MADS-box"/>
    <property type="match status" value="1"/>
</dbReference>
<dbReference type="InterPro" id="IPR050142">
    <property type="entry name" value="MADS-box/MEF2_TF"/>
</dbReference>
<dbReference type="InterPro" id="IPR033896">
    <property type="entry name" value="MEF2-like_N"/>
</dbReference>
<dbReference type="InterPro" id="IPR002100">
    <property type="entry name" value="TF_MADSbox"/>
</dbReference>
<dbReference type="InterPro" id="IPR036879">
    <property type="entry name" value="TF_MADSbox_sf"/>
</dbReference>
<dbReference type="PANTHER" id="PTHR48019">
    <property type="entry name" value="SERUM RESPONSE FACTOR HOMOLOG"/>
    <property type="match status" value="1"/>
</dbReference>
<dbReference type="Pfam" id="PF00319">
    <property type="entry name" value="SRF-TF"/>
    <property type="match status" value="1"/>
</dbReference>
<dbReference type="PRINTS" id="PR00404">
    <property type="entry name" value="MADSDOMAIN"/>
</dbReference>
<dbReference type="SMART" id="SM00432">
    <property type="entry name" value="MADS"/>
    <property type="match status" value="1"/>
</dbReference>
<dbReference type="SUPFAM" id="SSF55455">
    <property type="entry name" value="SRF-like"/>
    <property type="match status" value="1"/>
</dbReference>
<dbReference type="PROSITE" id="PS50066">
    <property type="entry name" value="MADS_BOX_2"/>
    <property type="match status" value="1"/>
</dbReference>
<keyword id="KW-0238">DNA-binding</keyword>
<keyword id="KW-0539">Nucleus</keyword>
<keyword id="KW-0804">Transcription</keyword>
<keyword id="KW-0805">Transcription regulation</keyword>
<keyword id="KW-0843">Virulence</keyword>
<evidence type="ECO:0000255" key="1">
    <source>
        <dbReference type="PROSITE-ProRule" id="PRU00251"/>
    </source>
</evidence>
<evidence type="ECO:0000256" key="2">
    <source>
        <dbReference type="SAM" id="MobiDB-lite"/>
    </source>
</evidence>
<evidence type="ECO:0000269" key="3">
    <source>
    </source>
</evidence>
<evidence type="ECO:0000303" key="4">
    <source>
    </source>
</evidence>
<evidence type="ECO:0000305" key="5"/>
<name>MIG1_PYROR</name>
<organism>
    <name type="scientific">Pyricularia oryzae</name>
    <name type="common">Rice blast fungus</name>
    <name type="synonym">Magnaporthe oryzae</name>
    <dbReference type="NCBI Taxonomy" id="318829"/>
    <lineage>
        <taxon>Eukaryota</taxon>
        <taxon>Fungi</taxon>
        <taxon>Dikarya</taxon>
        <taxon>Ascomycota</taxon>
        <taxon>Pezizomycotina</taxon>
        <taxon>Sordariomycetes</taxon>
        <taxon>Sordariomycetidae</taxon>
        <taxon>Magnaporthales</taxon>
        <taxon>Pyriculariaceae</taxon>
        <taxon>Pyricularia</taxon>
    </lineage>
</organism>
<reference key="1">
    <citation type="journal article" date="2008" name="Eukaryot. Cell">
        <title>MADS-box transcription factor mig1 is required for infectious growth in Magnaporthe grisea.</title>
        <authorList>
            <person name="Mehrabi R."/>
            <person name="Ding S."/>
            <person name="Xu J.R."/>
        </authorList>
    </citation>
    <scope>NUCLEOTIDE SEQUENCE [GENOMIC RNA]</scope>
    <scope>FUNCTION</scope>
    <scope>DISRUPTION PHENOTYPE</scope>
    <scope>SUBCELLULAR LOCATION</scope>
    <scope>DOMAIN</scope>
    <scope>INTERACTION WITH MPS1</scope>
    <scope>INDUCTION</scope>
    <source>
        <strain>Guyane 11</strain>
    </source>
</reference>
<gene>
    <name evidence="4" type="primary">MIG1</name>
</gene>
<accession>A9YDN6</accession>
<comment type="function">
    <text evidence="3">Transcription factor acting downstream of the MPS1 MAP kinase (MAPK) cascade during conidiation and plant infection (PubMed:18344407). Required for overcoming plant defense responses and the differentiation of secondary infectious hyphae in live plant cells (PubMed:18344407).</text>
</comment>
<comment type="subunit">
    <text evidence="3">Interacts with MAPK MPS1.</text>
</comment>
<comment type="subcellular location">
    <subcellularLocation>
        <location evidence="3">Nucleus</location>
    </subcellularLocation>
</comment>
<comment type="induction">
    <text evidence="3">Expressed in conidia but not in aerial hyphae or conidiophores.</text>
</comment>
<comment type="domain">
    <text evidence="3">The MADS-box domain is essential for the function but dispensable for nuclear localization.</text>
</comment>
<comment type="disruption phenotype">
    <text evidence="3">Leads to reduced aerial hyphal growth and conidiation (PubMed:18344407). Does not affect appressorium formation but impairs infectious growth (PubMed:18344407).</text>
</comment>
<comment type="similarity">
    <text evidence="5">Belongs to the MEF2 family.</text>
</comment>
<feature type="chain" id="PRO_0000453103" description="MADS-box MEF2 type transcription factor MIG1">
    <location>
        <begin position="1"/>
        <end position="702"/>
    </location>
</feature>
<feature type="domain" description="MADS-box" evidence="1">
    <location>
        <begin position="1"/>
        <end position="61"/>
    </location>
</feature>
<feature type="region of interest" description="Disordered" evidence="2">
    <location>
        <begin position="73"/>
        <end position="608"/>
    </location>
</feature>
<feature type="region of interest" description="Disordered" evidence="2">
    <location>
        <begin position="658"/>
        <end position="702"/>
    </location>
</feature>
<feature type="compositionally biased region" description="Acidic residues" evidence="2">
    <location>
        <begin position="86"/>
        <end position="96"/>
    </location>
</feature>
<feature type="compositionally biased region" description="Pro residues" evidence="2">
    <location>
        <begin position="132"/>
        <end position="144"/>
    </location>
</feature>
<feature type="compositionally biased region" description="Low complexity" evidence="2">
    <location>
        <begin position="145"/>
        <end position="155"/>
    </location>
</feature>
<feature type="compositionally biased region" description="Polar residues" evidence="2">
    <location>
        <begin position="180"/>
        <end position="195"/>
    </location>
</feature>
<feature type="compositionally biased region" description="Pro residues" evidence="2">
    <location>
        <begin position="201"/>
        <end position="241"/>
    </location>
</feature>
<feature type="compositionally biased region" description="Low complexity" evidence="2">
    <location>
        <begin position="273"/>
        <end position="284"/>
    </location>
</feature>
<feature type="compositionally biased region" description="Low complexity" evidence="2">
    <location>
        <begin position="326"/>
        <end position="343"/>
    </location>
</feature>
<feature type="compositionally biased region" description="Low complexity" evidence="2">
    <location>
        <begin position="350"/>
        <end position="371"/>
    </location>
</feature>
<feature type="compositionally biased region" description="Polar residues" evidence="2">
    <location>
        <begin position="456"/>
        <end position="465"/>
    </location>
</feature>
<feature type="compositionally biased region" description="Low complexity" evidence="2">
    <location>
        <begin position="487"/>
        <end position="512"/>
    </location>
</feature>
<feature type="compositionally biased region" description="Low complexity" evidence="2">
    <location>
        <begin position="530"/>
        <end position="553"/>
    </location>
</feature>
<feature type="compositionally biased region" description="Polar residues" evidence="2">
    <location>
        <begin position="554"/>
        <end position="567"/>
    </location>
</feature>
<feature type="compositionally biased region" description="Pro residues" evidence="2">
    <location>
        <begin position="587"/>
        <end position="600"/>
    </location>
</feature>
<feature type="compositionally biased region" description="Basic and acidic residues" evidence="2">
    <location>
        <begin position="693"/>
        <end position="702"/>
    </location>
</feature>
<proteinExistence type="evidence at protein level"/>
<protein>
    <recommendedName>
        <fullName evidence="4">MADS-box MEF2 type transcription factor MIG1</fullName>
    </recommendedName>
</protein>